<gene>
    <name type="ORF">DDB_G0285445</name>
</gene>
<feature type="chain" id="PRO_0000327395" description="F-box/WD repeat-containing protein A-like protein">
    <location>
        <begin position="1"/>
        <end position="1178"/>
    </location>
</feature>
<feature type="domain" description="START" evidence="3">
    <location>
        <begin position="1"/>
        <end position="208"/>
    </location>
</feature>
<feature type="domain" description="F-box" evidence="2">
    <location>
        <begin position="717"/>
        <end position="763"/>
    </location>
</feature>
<feature type="repeat" description="WD 1">
    <location>
        <begin position="886"/>
        <end position="923"/>
    </location>
</feature>
<feature type="repeat" description="WD 2">
    <location>
        <begin position="925"/>
        <end position="979"/>
    </location>
</feature>
<feature type="repeat" description="WD 3">
    <location>
        <begin position="981"/>
        <end position="1017"/>
    </location>
</feature>
<feature type="repeat" description="WD 4">
    <location>
        <begin position="1020"/>
        <end position="1059"/>
    </location>
</feature>
<feature type="repeat" description="WD 5">
    <location>
        <begin position="1062"/>
        <end position="1100"/>
    </location>
</feature>
<feature type="repeat" description="WD 6">
    <location>
        <begin position="1104"/>
        <end position="1141"/>
    </location>
</feature>
<feature type="repeat" description="WD 7">
    <location>
        <begin position="1146"/>
        <end position="1178"/>
    </location>
</feature>
<feature type="region of interest" description="Disordered" evidence="4">
    <location>
        <begin position="223"/>
        <end position="296"/>
    </location>
</feature>
<feature type="region of interest" description="Disordered" evidence="4">
    <location>
        <begin position="569"/>
        <end position="594"/>
    </location>
</feature>
<feature type="region of interest" description="Disordered" evidence="4">
    <location>
        <begin position="618"/>
        <end position="649"/>
    </location>
</feature>
<feature type="region of interest" description="Disordered" evidence="4">
    <location>
        <begin position="804"/>
        <end position="841"/>
    </location>
</feature>
<feature type="compositionally biased region" description="Low complexity" evidence="4">
    <location>
        <begin position="229"/>
        <end position="293"/>
    </location>
</feature>
<feature type="compositionally biased region" description="Low complexity" evidence="4">
    <location>
        <begin position="571"/>
        <end position="580"/>
    </location>
</feature>
<feature type="compositionally biased region" description="Low complexity" evidence="4">
    <location>
        <begin position="809"/>
        <end position="820"/>
    </location>
</feature>
<feature type="compositionally biased region" description="Pro residues" evidence="4">
    <location>
        <begin position="821"/>
        <end position="835"/>
    </location>
</feature>
<accession>Q54N86</accession>
<keyword id="KW-1185">Reference proteome</keyword>
<keyword id="KW-0677">Repeat</keyword>
<keyword id="KW-0833">Ubl conjugation pathway</keyword>
<keyword id="KW-0853">WD repeat</keyword>
<evidence type="ECO:0000250" key="1"/>
<evidence type="ECO:0000255" key="2">
    <source>
        <dbReference type="PROSITE-ProRule" id="PRU00080"/>
    </source>
</evidence>
<evidence type="ECO:0000255" key="3">
    <source>
        <dbReference type="PROSITE-ProRule" id="PRU00197"/>
    </source>
</evidence>
<evidence type="ECO:0000256" key="4">
    <source>
        <dbReference type="SAM" id="MobiDB-lite"/>
    </source>
</evidence>
<reference key="1">
    <citation type="journal article" date="2005" name="Nature">
        <title>The genome of the social amoeba Dictyostelium discoideum.</title>
        <authorList>
            <person name="Eichinger L."/>
            <person name="Pachebat J.A."/>
            <person name="Gloeckner G."/>
            <person name="Rajandream M.A."/>
            <person name="Sucgang R."/>
            <person name="Berriman M."/>
            <person name="Song J."/>
            <person name="Olsen R."/>
            <person name="Szafranski K."/>
            <person name="Xu Q."/>
            <person name="Tunggal B."/>
            <person name="Kummerfeld S."/>
            <person name="Madera M."/>
            <person name="Konfortov B.A."/>
            <person name="Rivero F."/>
            <person name="Bankier A.T."/>
            <person name="Lehmann R."/>
            <person name="Hamlin N."/>
            <person name="Davies R."/>
            <person name="Gaudet P."/>
            <person name="Fey P."/>
            <person name="Pilcher K."/>
            <person name="Chen G."/>
            <person name="Saunders D."/>
            <person name="Sodergren E.J."/>
            <person name="Davis P."/>
            <person name="Kerhornou A."/>
            <person name="Nie X."/>
            <person name="Hall N."/>
            <person name="Anjard C."/>
            <person name="Hemphill L."/>
            <person name="Bason N."/>
            <person name="Farbrother P."/>
            <person name="Desany B."/>
            <person name="Just E."/>
            <person name="Morio T."/>
            <person name="Rost R."/>
            <person name="Churcher C.M."/>
            <person name="Cooper J."/>
            <person name="Haydock S."/>
            <person name="van Driessche N."/>
            <person name="Cronin A."/>
            <person name="Goodhead I."/>
            <person name="Muzny D.M."/>
            <person name="Mourier T."/>
            <person name="Pain A."/>
            <person name="Lu M."/>
            <person name="Harper D."/>
            <person name="Lindsay R."/>
            <person name="Hauser H."/>
            <person name="James K.D."/>
            <person name="Quiles M."/>
            <person name="Madan Babu M."/>
            <person name="Saito T."/>
            <person name="Buchrieser C."/>
            <person name="Wardroper A."/>
            <person name="Felder M."/>
            <person name="Thangavelu M."/>
            <person name="Johnson D."/>
            <person name="Knights A."/>
            <person name="Loulseged H."/>
            <person name="Mungall K.L."/>
            <person name="Oliver K."/>
            <person name="Price C."/>
            <person name="Quail M.A."/>
            <person name="Urushihara H."/>
            <person name="Hernandez J."/>
            <person name="Rabbinowitsch E."/>
            <person name="Steffen D."/>
            <person name="Sanders M."/>
            <person name="Ma J."/>
            <person name="Kohara Y."/>
            <person name="Sharp S."/>
            <person name="Simmonds M.N."/>
            <person name="Spiegler S."/>
            <person name="Tivey A."/>
            <person name="Sugano S."/>
            <person name="White B."/>
            <person name="Walker D."/>
            <person name="Woodward J.R."/>
            <person name="Winckler T."/>
            <person name="Tanaka Y."/>
            <person name="Shaulsky G."/>
            <person name="Schleicher M."/>
            <person name="Weinstock G.M."/>
            <person name="Rosenthal A."/>
            <person name="Cox E.C."/>
            <person name="Chisholm R.L."/>
            <person name="Gibbs R.A."/>
            <person name="Loomis W.F."/>
            <person name="Platzer M."/>
            <person name="Kay R.R."/>
            <person name="Williams J.G."/>
            <person name="Dear P.H."/>
            <person name="Noegel A.A."/>
            <person name="Barrell B.G."/>
            <person name="Kuspa A."/>
        </authorList>
    </citation>
    <scope>NUCLEOTIDE SEQUENCE [LARGE SCALE GENOMIC DNA]</scope>
    <source>
        <strain>AX4</strain>
    </source>
</reference>
<dbReference type="EMBL" id="AAFI02000079">
    <property type="protein sequence ID" value="EAL64560.1"/>
    <property type="molecule type" value="Genomic_DNA"/>
</dbReference>
<dbReference type="RefSeq" id="XP_638057.1">
    <property type="nucleotide sequence ID" value="XM_632965.1"/>
</dbReference>
<dbReference type="SMR" id="Q54N86"/>
<dbReference type="FunCoup" id="Q54N86">
    <property type="interactions" value="362"/>
</dbReference>
<dbReference type="STRING" id="44689.Q54N86"/>
<dbReference type="PaxDb" id="44689-DDB0237749"/>
<dbReference type="EnsemblProtists" id="EAL64560">
    <property type="protein sequence ID" value="EAL64560"/>
    <property type="gene ID" value="DDB_G0285445"/>
</dbReference>
<dbReference type="GeneID" id="8625103"/>
<dbReference type="KEGG" id="ddi:DDB_G0285445"/>
<dbReference type="dictyBase" id="DDB_G0285445"/>
<dbReference type="VEuPathDB" id="AmoebaDB:DDB_G0285445"/>
<dbReference type="eggNOG" id="KOG0274">
    <property type="taxonomic scope" value="Eukaryota"/>
</dbReference>
<dbReference type="HOGENOM" id="CLU_273369_0_0_1"/>
<dbReference type="InParanoid" id="Q54N86"/>
<dbReference type="OMA" id="KSWNIAT"/>
<dbReference type="PRO" id="PR:Q54N86"/>
<dbReference type="Proteomes" id="UP000002195">
    <property type="component" value="Chromosome 4"/>
</dbReference>
<dbReference type="GO" id="GO:0008289">
    <property type="term" value="F:lipid binding"/>
    <property type="evidence" value="ECO:0007669"/>
    <property type="project" value="InterPro"/>
</dbReference>
<dbReference type="CDD" id="cd22117">
    <property type="entry name" value="F-box_FBXL4"/>
    <property type="match status" value="1"/>
</dbReference>
<dbReference type="CDD" id="cd00177">
    <property type="entry name" value="START"/>
    <property type="match status" value="1"/>
</dbReference>
<dbReference type="FunFam" id="3.30.530.20:FF:000132">
    <property type="entry name" value="F-box/WD repeat-containing protein A-like protein"/>
    <property type="match status" value="1"/>
</dbReference>
<dbReference type="Gene3D" id="1.20.1280.50">
    <property type="match status" value="1"/>
</dbReference>
<dbReference type="Gene3D" id="3.30.530.20">
    <property type="match status" value="2"/>
</dbReference>
<dbReference type="Gene3D" id="2.130.10.10">
    <property type="entry name" value="YVTN repeat-like/Quinoprotein amine dehydrogenase"/>
    <property type="match status" value="1"/>
</dbReference>
<dbReference type="InterPro" id="IPR036047">
    <property type="entry name" value="F-box-like_dom_sf"/>
</dbReference>
<dbReference type="InterPro" id="IPR001810">
    <property type="entry name" value="F-box_dom"/>
</dbReference>
<dbReference type="InterPro" id="IPR023393">
    <property type="entry name" value="START-like_dom_sf"/>
</dbReference>
<dbReference type="InterPro" id="IPR002913">
    <property type="entry name" value="START_lipid-bd_dom"/>
</dbReference>
<dbReference type="InterPro" id="IPR015943">
    <property type="entry name" value="WD40/YVTN_repeat-like_dom_sf"/>
</dbReference>
<dbReference type="InterPro" id="IPR019775">
    <property type="entry name" value="WD40_repeat_CS"/>
</dbReference>
<dbReference type="InterPro" id="IPR036322">
    <property type="entry name" value="WD40_repeat_dom_sf"/>
</dbReference>
<dbReference type="InterPro" id="IPR001680">
    <property type="entry name" value="WD40_rpt"/>
</dbReference>
<dbReference type="PANTHER" id="PTHR19848:SF8">
    <property type="entry name" value="F-BOX AND WD REPEAT DOMAIN CONTAINING 7"/>
    <property type="match status" value="1"/>
</dbReference>
<dbReference type="PANTHER" id="PTHR19848">
    <property type="entry name" value="WD40 REPEAT PROTEIN"/>
    <property type="match status" value="1"/>
</dbReference>
<dbReference type="Pfam" id="PF12937">
    <property type="entry name" value="F-box-like"/>
    <property type="match status" value="1"/>
</dbReference>
<dbReference type="Pfam" id="PF01852">
    <property type="entry name" value="START"/>
    <property type="match status" value="1"/>
</dbReference>
<dbReference type="Pfam" id="PF00400">
    <property type="entry name" value="WD40"/>
    <property type="match status" value="2"/>
</dbReference>
<dbReference type="SMART" id="SM00256">
    <property type="entry name" value="FBOX"/>
    <property type="match status" value="1"/>
</dbReference>
<dbReference type="SMART" id="SM00320">
    <property type="entry name" value="WD40"/>
    <property type="match status" value="5"/>
</dbReference>
<dbReference type="SUPFAM" id="SSF55961">
    <property type="entry name" value="Bet v1-like"/>
    <property type="match status" value="2"/>
</dbReference>
<dbReference type="SUPFAM" id="SSF81383">
    <property type="entry name" value="F-box domain"/>
    <property type="match status" value="1"/>
</dbReference>
<dbReference type="SUPFAM" id="SSF50978">
    <property type="entry name" value="WD40 repeat-like"/>
    <property type="match status" value="1"/>
</dbReference>
<dbReference type="PROSITE" id="PS50181">
    <property type="entry name" value="FBOX"/>
    <property type="match status" value="1"/>
</dbReference>
<dbReference type="PROSITE" id="PS50848">
    <property type="entry name" value="START"/>
    <property type="match status" value="1"/>
</dbReference>
<dbReference type="PROSITE" id="PS00678">
    <property type="entry name" value="WD_REPEATS_1"/>
    <property type="match status" value="2"/>
</dbReference>
<dbReference type="PROSITE" id="PS50082">
    <property type="entry name" value="WD_REPEATS_2"/>
    <property type="match status" value="2"/>
</dbReference>
<dbReference type="PROSITE" id="PS50294">
    <property type="entry name" value="WD_REPEATS_REGION"/>
    <property type="match status" value="2"/>
</dbReference>
<comment type="function">
    <text evidence="1">Substrate recognition component of a SCF (SKP1-CUL1-F-box protein) E3 ubiquitin-protein ligase complex which mediates the ubiquitination and subsequent proteasomal degradation of target proteins.</text>
</comment>
<name>FBXAL_DICDI</name>
<sequence>MQYVNGMDIVKSVYDEVKYLINYTTMPWTDLGEYEECSVQSIENPTEEGLIFKCIGEINTSPEIPLNVLYNANLQQIWDELCIESKKIEQLDSCNSVDYYSFGSPLGGAPRDFVFLRNFSVDFENKSAWVVIRSIHHESIPSPTYMKPSGWEFLQISPNKTRITLVVQINDLTIAPYLRINSVDLKRIYRNTGIQITHTLPNLIKYIKKNYKKEIENNFKKFKTPDLFNPNLNNNNNNNNNNNNNNNNNNNNNNNNNNNNNNNNQQQNIKNSNSNENNNNNSDSITNSNSNENLNEKDGKKILLPQLSEEFEFLDVDEELYDVDKTPTFMFKETSKTVGELEVNPVETGWNCFRKFNDYTFYYRDYDENSLDFACSGSSFIDASAEVIFSYIFSEYSCKIDQWTCGMKTLKKLDQVTSLERMSFRSVLAPKDVLSAVLVKQVNYFQKGIIFLGYRSLLKPSTIVKTGFWYSPSAYYIIPQERGCIIRYILKFRMYLPPSTYKIYPKKQILYVISEKTRATVEMIKYYSINPFYLHKRKQQEFPHWEGIDKFSELAEIFSNIQIRHSKPSLIINSPPNSNNHENEKKRKFRDNGINSTSISIPSTQFCFSSGGGSGGSSSSSSSTSSSLTFSPPQQLSSPTSSSSSSTFSNDSALIDNNQQLDINNNNDQEYLRFSENWESYITRKPFLLLISSGLHLRKPPKKKSPRYLESHNLKTCSLFDLLPYEMIQYIFTLMDATHLIRMSRTCKYFNRICLDDNIWRDLYNREFTKNSSDSLFKWSSIEDINLGTEKKQLLDLTFDHSKKKSNNSSPLSASSSSSSPSPPLLPPPPPPIPQLPDMLLENNNKYNNREQIQKNEHYWLNMFREKETINRHWRAGNGKVSNLRGHKGKISCLQMAPNQIFTGSKDKEFKSWNIATKQCESTTRCGASSVISFEKDNFTKLSTDIFPYCLFMHGIIRLGCSNGAIQHYNIATKEIEKEQRFLYVSNGFIFMKRDIYSYESNTVKLYDSETEQELQMIEIENTKINHCKIGRFENFCMIACTDKTVKLWDIDSNKTELVLNGHKGSVNCLDFLNDYQLITGSSDKTIRMWDIRNPSSAIHNIKSHSSKVKAISIYNNLRMCTGDEDSICLWNLEGSNEPNLLTTINNLSPVECLSIDDETMLAGFSDGEVSYYDFNSK</sequence>
<organism>
    <name type="scientific">Dictyostelium discoideum</name>
    <name type="common">Social amoeba</name>
    <dbReference type="NCBI Taxonomy" id="44689"/>
    <lineage>
        <taxon>Eukaryota</taxon>
        <taxon>Amoebozoa</taxon>
        <taxon>Evosea</taxon>
        <taxon>Eumycetozoa</taxon>
        <taxon>Dictyostelia</taxon>
        <taxon>Dictyosteliales</taxon>
        <taxon>Dictyosteliaceae</taxon>
        <taxon>Dictyostelium</taxon>
    </lineage>
</organism>
<protein>
    <recommendedName>
        <fullName>F-box/WD repeat-containing protein A-like protein</fullName>
    </recommendedName>
</protein>
<proteinExistence type="inferred from homology"/>